<feature type="chain" id="PRO_1000025416" description="Argininosuccinate synthase">
    <location>
        <begin position="1"/>
        <end position="446"/>
    </location>
</feature>
<feature type="binding site" evidence="1">
    <location>
        <begin position="17"/>
        <end position="25"/>
    </location>
    <ligand>
        <name>ATP</name>
        <dbReference type="ChEBI" id="CHEBI:30616"/>
    </ligand>
</feature>
<feature type="binding site" evidence="1">
    <location>
        <position position="43"/>
    </location>
    <ligand>
        <name>ATP</name>
        <dbReference type="ChEBI" id="CHEBI:30616"/>
    </ligand>
</feature>
<feature type="binding site" evidence="1">
    <location>
        <position position="99"/>
    </location>
    <ligand>
        <name>L-citrulline</name>
        <dbReference type="ChEBI" id="CHEBI:57743"/>
    </ligand>
</feature>
<feature type="binding site" evidence="1">
    <location>
        <position position="129"/>
    </location>
    <ligand>
        <name>ATP</name>
        <dbReference type="ChEBI" id="CHEBI:30616"/>
    </ligand>
</feature>
<feature type="binding site" evidence="1">
    <location>
        <position position="131"/>
    </location>
    <ligand>
        <name>ATP</name>
        <dbReference type="ChEBI" id="CHEBI:30616"/>
    </ligand>
</feature>
<feature type="binding site" evidence="1">
    <location>
        <position position="131"/>
    </location>
    <ligand>
        <name>L-aspartate</name>
        <dbReference type="ChEBI" id="CHEBI:29991"/>
    </ligand>
</feature>
<feature type="binding site" evidence="1">
    <location>
        <position position="135"/>
    </location>
    <ligand>
        <name>L-aspartate</name>
        <dbReference type="ChEBI" id="CHEBI:29991"/>
    </ligand>
</feature>
<feature type="binding site" evidence="1">
    <location>
        <position position="135"/>
    </location>
    <ligand>
        <name>L-citrulline</name>
        <dbReference type="ChEBI" id="CHEBI:57743"/>
    </ligand>
</feature>
<feature type="binding site" evidence="1">
    <location>
        <position position="136"/>
    </location>
    <ligand>
        <name>ATP</name>
        <dbReference type="ChEBI" id="CHEBI:30616"/>
    </ligand>
</feature>
<feature type="binding site" evidence="1">
    <location>
        <position position="136"/>
    </location>
    <ligand>
        <name>L-aspartate</name>
        <dbReference type="ChEBI" id="CHEBI:29991"/>
    </ligand>
</feature>
<feature type="binding site" evidence="1">
    <location>
        <position position="139"/>
    </location>
    <ligand>
        <name>L-citrulline</name>
        <dbReference type="ChEBI" id="CHEBI:57743"/>
    </ligand>
</feature>
<feature type="binding site" evidence="1">
    <location>
        <position position="192"/>
    </location>
    <ligand>
        <name>L-citrulline</name>
        <dbReference type="ChEBI" id="CHEBI:57743"/>
    </ligand>
</feature>
<feature type="binding site" evidence="1">
    <location>
        <position position="194"/>
    </location>
    <ligand>
        <name>ATP</name>
        <dbReference type="ChEBI" id="CHEBI:30616"/>
    </ligand>
</feature>
<feature type="binding site" evidence="1">
    <location>
        <position position="201"/>
    </location>
    <ligand>
        <name>L-citrulline</name>
        <dbReference type="ChEBI" id="CHEBI:57743"/>
    </ligand>
</feature>
<feature type="binding site" evidence="1">
    <location>
        <position position="203"/>
    </location>
    <ligand>
        <name>L-citrulline</name>
        <dbReference type="ChEBI" id="CHEBI:57743"/>
    </ligand>
</feature>
<feature type="binding site" evidence="1">
    <location>
        <position position="280"/>
    </location>
    <ligand>
        <name>L-citrulline</name>
        <dbReference type="ChEBI" id="CHEBI:57743"/>
    </ligand>
</feature>
<protein>
    <recommendedName>
        <fullName evidence="1">Argininosuccinate synthase</fullName>
        <ecNumber evidence="1">6.3.4.5</ecNumber>
    </recommendedName>
    <alternativeName>
        <fullName evidence="1">Citrulline--aspartate ligase</fullName>
    </alternativeName>
</protein>
<evidence type="ECO:0000255" key="1">
    <source>
        <dbReference type="HAMAP-Rule" id="MF_00581"/>
    </source>
</evidence>
<comment type="catalytic activity">
    <reaction evidence="1">
        <text>L-citrulline + L-aspartate + ATP = 2-(N(omega)-L-arginino)succinate + AMP + diphosphate + H(+)</text>
        <dbReference type="Rhea" id="RHEA:10932"/>
        <dbReference type="ChEBI" id="CHEBI:15378"/>
        <dbReference type="ChEBI" id="CHEBI:29991"/>
        <dbReference type="ChEBI" id="CHEBI:30616"/>
        <dbReference type="ChEBI" id="CHEBI:33019"/>
        <dbReference type="ChEBI" id="CHEBI:57472"/>
        <dbReference type="ChEBI" id="CHEBI:57743"/>
        <dbReference type="ChEBI" id="CHEBI:456215"/>
        <dbReference type="EC" id="6.3.4.5"/>
    </reaction>
</comment>
<comment type="pathway">
    <text evidence="1">Amino-acid biosynthesis; L-arginine biosynthesis; L-arginine from L-ornithine and carbamoyl phosphate: step 2/3.</text>
</comment>
<comment type="subunit">
    <text evidence="1">Homotetramer.</text>
</comment>
<comment type="subcellular location">
    <subcellularLocation>
        <location evidence="1">Cytoplasm</location>
    </subcellularLocation>
</comment>
<comment type="similarity">
    <text evidence="1">Belongs to the argininosuccinate synthase family. Type 2 subfamily.</text>
</comment>
<sequence length="446" mass="49697">MTTILENLPAGQKVGIAFSGGLDTSAALHWMRIKGAVPYAYTANLGQPDEDDYDAIPKRAIQYGAEGARLIDCRAQLVAEGIAALQCGAFHISTAGVTYFNTTPIGRAVTGTMLVAAMKEDGVNIWGDGSTYKGNDIERFYRYGLLVNPDLKIYKPWLDQQFIDELGGRAEMSEFMRQAGFEYKMSAEKAYSTDSNLLGATHEAKDLESLESGIKIVNPIMGVAFWRDDVKIDKEEVTIRFEEGRPVALNGVEYKDAVALLLEANRIGGRHGLGMSDQIENRIIEAKSRGIYEAPGLALLYIAYERLVTGIHNEDTIEQYRENGRRLGRLLYQGRWFDPQAIMLRETAQRWVARAVTGEVTVELRRGNDYSIIGTRSPNLTYQPERLSMEKVQSMFSPRDRIGQLTMRNLDITDTRDKLRIYSQVGLLAAGESSALPKLKEDESGN</sequence>
<keyword id="KW-0028">Amino-acid biosynthesis</keyword>
<keyword id="KW-0055">Arginine biosynthesis</keyword>
<keyword id="KW-0067">ATP-binding</keyword>
<keyword id="KW-0963">Cytoplasm</keyword>
<keyword id="KW-0436">Ligase</keyword>
<keyword id="KW-0547">Nucleotide-binding</keyword>
<proteinExistence type="inferred from homology"/>
<reference key="1">
    <citation type="journal article" date="2010" name="Genome Biol. Evol.">
        <title>Continuing evolution of Burkholderia mallei through genome reduction and large-scale rearrangements.</title>
        <authorList>
            <person name="Losada L."/>
            <person name="Ronning C.M."/>
            <person name="DeShazer D."/>
            <person name="Woods D."/>
            <person name="Fedorova N."/>
            <person name="Kim H.S."/>
            <person name="Shabalina S.A."/>
            <person name="Pearson T.R."/>
            <person name="Brinkac L."/>
            <person name="Tan P."/>
            <person name="Nandi T."/>
            <person name="Crabtree J."/>
            <person name="Badger J."/>
            <person name="Beckstrom-Sternberg S."/>
            <person name="Saqib M."/>
            <person name="Schutzer S.E."/>
            <person name="Keim P."/>
            <person name="Nierman W.C."/>
        </authorList>
    </citation>
    <scope>NUCLEOTIDE SEQUENCE [LARGE SCALE GENOMIC DNA]</scope>
    <source>
        <strain>1710b</strain>
    </source>
</reference>
<organism>
    <name type="scientific">Burkholderia pseudomallei (strain 1710b)</name>
    <dbReference type="NCBI Taxonomy" id="320372"/>
    <lineage>
        <taxon>Bacteria</taxon>
        <taxon>Pseudomonadati</taxon>
        <taxon>Pseudomonadota</taxon>
        <taxon>Betaproteobacteria</taxon>
        <taxon>Burkholderiales</taxon>
        <taxon>Burkholderiaceae</taxon>
        <taxon>Burkholderia</taxon>
        <taxon>pseudomallei group</taxon>
    </lineage>
</organism>
<name>ASSY_BURP1</name>
<accession>Q3JWY8</accession>
<gene>
    <name evidence="1" type="primary">argG</name>
    <name type="ordered locus">BURPS1710b_0501</name>
</gene>
<dbReference type="EC" id="6.3.4.5" evidence="1"/>
<dbReference type="EMBL" id="CP000124">
    <property type="protein sequence ID" value="ABA50402.1"/>
    <property type="molecule type" value="Genomic_DNA"/>
</dbReference>
<dbReference type="RefSeq" id="WP_004189990.1">
    <property type="nucleotide sequence ID" value="NC_007434.1"/>
</dbReference>
<dbReference type="SMR" id="Q3JWY8"/>
<dbReference type="EnsemblBacteria" id="ABA50402">
    <property type="protein sequence ID" value="ABA50402"/>
    <property type="gene ID" value="BURPS1710b_0501"/>
</dbReference>
<dbReference type="GeneID" id="93058813"/>
<dbReference type="KEGG" id="bpm:BURPS1710b_0501"/>
<dbReference type="HOGENOM" id="CLU_032784_4_1_4"/>
<dbReference type="UniPathway" id="UPA00068">
    <property type="reaction ID" value="UER00113"/>
</dbReference>
<dbReference type="Proteomes" id="UP000002700">
    <property type="component" value="Chromosome I"/>
</dbReference>
<dbReference type="GO" id="GO:0005737">
    <property type="term" value="C:cytoplasm"/>
    <property type="evidence" value="ECO:0007669"/>
    <property type="project" value="UniProtKB-SubCell"/>
</dbReference>
<dbReference type="GO" id="GO:0004055">
    <property type="term" value="F:argininosuccinate synthase activity"/>
    <property type="evidence" value="ECO:0007669"/>
    <property type="project" value="UniProtKB-UniRule"/>
</dbReference>
<dbReference type="GO" id="GO:0005524">
    <property type="term" value="F:ATP binding"/>
    <property type="evidence" value="ECO:0007669"/>
    <property type="project" value="UniProtKB-UniRule"/>
</dbReference>
<dbReference type="GO" id="GO:0042803">
    <property type="term" value="F:protein homodimerization activity"/>
    <property type="evidence" value="ECO:0007669"/>
    <property type="project" value="InterPro"/>
</dbReference>
<dbReference type="GO" id="GO:0000053">
    <property type="term" value="P:argininosuccinate metabolic process"/>
    <property type="evidence" value="ECO:0007669"/>
    <property type="project" value="TreeGrafter"/>
</dbReference>
<dbReference type="GO" id="GO:0006526">
    <property type="term" value="P:L-arginine biosynthetic process"/>
    <property type="evidence" value="ECO:0007669"/>
    <property type="project" value="UniProtKB-UniRule"/>
</dbReference>
<dbReference type="GO" id="GO:0000050">
    <property type="term" value="P:urea cycle"/>
    <property type="evidence" value="ECO:0007669"/>
    <property type="project" value="TreeGrafter"/>
</dbReference>
<dbReference type="CDD" id="cd01999">
    <property type="entry name" value="ASS"/>
    <property type="match status" value="1"/>
</dbReference>
<dbReference type="FunFam" id="1.10.287.400:FF:000001">
    <property type="entry name" value="Argininosuccinate synthase"/>
    <property type="match status" value="1"/>
</dbReference>
<dbReference type="Gene3D" id="1.10.287.400">
    <property type="match status" value="1"/>
</dbReference>
<dbReference type="Gene3D" id="3.90.1260.10">
    <property type="entry name" value="Argininosuccinate synthetase, chain A, domain 2"/>
    <property type="match status" value="1"/>
</dbReference>
<dbReference type="Gene3D" id="3.40.50.620">
    <property type="entry name" value="HUPs"/>
    <property type="match status" value="1"/>
</dbReference>
<dbReference type="HAMAP" id="MF_00581">
    <property type="entry name" value="Arg_succ_synth_type2"/>
    <property type="match status" value="1"/>
</dbReference>
<dbReference type="InterPro" id="IPR023437">
    <property type="entry name" value="Arg_succ_synth_type2_subfam"/>
</dbReference>
<dbReference type="InterPro" id="IPR048268">
    <property type="entry name" value="Arginosuc_syn_C"/>
</dbReference>
<dbReference type="InterPro" id="IPR048267">
    <property type="entry name" value="Arginosuc_syn_N"/>
</dbReference>
<dbReference type="InterPro" id="IPR001518">
    <property type="entry name" value="Arginosuc_synth"/>
</dbReference>
<dbReference type="InterPro" id="IPR018223">
    <property type="entry name" value="Arginosuc_synth_CS"/>
</dbReference>
<dbReference type="InterPro" id="IPR023434">
    <property type="entry name" value="Arginosuc_synth_type_1_subfam"/>
</dbReference>
<dbReference type="InterPro" id="IPR024074">
    <property type="entry name" value="AS_cat/multimer_dom_body"/>
</dbReference>
<dbReference type="InterPro" id="IPR024073">
    <property type="entry name" value="AS_multimer_C_tail"/>
</dbReference>
<dbReference type="InterPro" id="IPR014729">
    <property type="entry name" value="Rossmann-like_a/b/a_fold"/>
</dbReference>
<dbReference type="NCBIfam" id="TIGR00032">
    <property type="entry name" value="argG"/>
    <property type="match status" value="1"/>
</dbReference>
<dbReference type="NCBIfam" id="NF003779">
    <property type="entry name" value="PRK05370.1"/>
    <property type="match status" value="1"/>
</dbReference>
<dbReference type="PANTHER" id="PTHR11587">
    <property type="entry name" value="ARGININOSUCCINATE SYNTHASE"/>
    <property type="match status" value="1"/>
</dbReference>
<dbReference type="PANTHER" id="PTHR11587:SF2">
    <property type="entry name" value="ARGININOSUCCINATE SYNTHASE"/>
    <property type="match status" value="1"/>
</dbReference>
<dbReference type="Pfam" id="PF20979">
    <property type="entry name" value="Arginosuc_syn_C"/>
    <property type="match status" value="1"/>
</dbReference>
<dbReference type="Pfam" id="PF00764">
    <property type="entry name" value="Arginosuc_synth"/>
    <property type="match status" value="1"/>
</dbReference>
<dbReference type="SUPFAM" id="SSF52402">
    <property type="entry name" value="Adenine nucleotide alpha hydrolases-like"/>
    <property type="match status" value="1"/>
</dbReference>
<dbReference type="SUPFAM" id="SSF69864">
    <property type="entry name" value="Argininosuccinate synthetase, C-terminal domain"/>
    <property type="match status" value="1"/>
</dbReference>
<dbReference type="PROSITE" id="PS00564">
    <property type="entry name" value="ARGININOSUCCIN_SYN_1"/>
    <property type="match status" value="1"/>
</dbReference>
<dbReference type="PROSITE" id="PS00565">
    <property type="entry name" value="ARGININOSUCCIN_SYN_2"/>
    <property type="match status" value="1"/>
</dbReference>